<name>CCND1_CANLF</name>
<dbReference type="EMBL" id="AY620434">
    <property type="protein sequence ID" value="AAT72919.1"/>
    <property type="molecule type" value="mRNA"/>
</dbReference>
<dbReference type="RefSeq" id="NP_001005757.1">
    <property type="nucleotide sequence ID" value="NM_001005757.1"/>
</dbReference>
<dbReference type="SMR" id="Q64HP0"/>
<dbReference type="FunCoup" id="Q64HP0">
    <property type="interactions" value="809"/>
</dbReference>
<dbReference type="STRING" id="9615.ENSCAFP00000061968"/>
<dbReference type="PaxDb" id="9612-ENSCAFP00000015750"/>
<dbReference type="GeneID" id="449028"/>
<dbReference type="KEGG" id="cfa:449028"/>
<dbReference type="CTD" id="595"/>
<dbReference type="eggNOG" id="KOG0656">
    <property type="taxonomic scope" value="Eukaryota"/>
</dbReference>
<dbReference type="InParanoid" id="Q64HP0"/>
<dbReference type="OrthoDB" id="306099at2759"/>
<dbReference type="Proteomes" id="UP000002254">
    <property type="component" value="Unplaced"/>
</dbReference>
<dbReference type="Proteomes" id="UP000694429">
    <property type="component" value="Unplaced"/>
</dbReference>
<dbReference type="Proteomes" id="UP000694542">
    <property type="component" value="Unplaced"/>
</dbReference>
<dbReference type="Proteomes" id="UP000805418">
    <property type="component" value="Unplaced"/>
</dbReference>
<dbReference type="GO" id="GO:0000307">
    <property type="term" value="C:cyclin-dependent protein kinase holoenzyme complex"/>
    <property type="evidence" value="ECO:0000250"/>
    <property type="project" value="UniProtKB"/>
</dbReference>
<dbReference type="GO" id="GO:0005737">
    <property type="term" value="C:cytoplasm"/>
    <property type="evidence" value="ECO:0000318"/>
    <property type="project" value="GO_Central"/>
</dbReference>
<dbReference type="GO" id="GO:0005815">
    <property type="term" value="C:microtubule organizing center"/>
    <property type="evidence" value="ECO:0000318"/>
    <property type="project" value="GO_Central"/>
</dbReference>
<dbReference type="GO" id="GO:0031965">
    <property type="term" value="C:nuclear membrane"/>
    <property type="evidence" value="ECO:0007669"/>
    <property type="project" value="UniProtKB-SubCell"/>
</dbReference>
<dbReference type="GO" id="GO:0005634">
    <property type="term" value="C:nucleus"/>
    <property type="evidence" value="ECO:0000250"/>
    <property type="project" value="UniProtKB"/>
</dbReference>
<dbReference type="GO" id="GO:0017053">
    <property type="term" value="C:transcription repressor complex"/>
    <property type="evidence" value="ECO:0000250"/>
    <property type="project" value="UniProtKB"/>
</dbReference>
<dbReference type="GO" id="GO:0016538">
    <property type="term" value="F:cyclin-dependent protein serine/threonine kinase regulator activity"/>
    <property type="evidence" value="ECO:0000318"/>
    <property type="project" value="GO_Central"/>
</dbReference>
<dbReference type="GO" id="GO:0043539">
    <property type="term" value="F:protein serine/threonine kinase activator activity"/>
    <property type="evidence" value="ECO:0000250"/>
    <property type="project" value="UniProtKB"/>
</dbReference>
<dbReference type="GO" id="GO:0003714">
    <property type="term" value="F:transcription corepressor activity"/>
    <property type="evidence" value="ECO:0000250"/>
    <property type="project" value="UniProtKB"/>
</dbReference>
<dbReference type="GO" id="GO:0051301">
    <property type="term" value="P:cell division"/>
    <property type="evidence" value="ECO:0007669"/>
    <property type="project" value="UniProtKB-KW"/>
</dbReference>
<dbReference type="GO" id="GO:0006974">
    <property type="term" value="P:DNA damage response"/>
    <property type="evidence" value="ECO:0000250"/>
    <property type="project" value="UniProtKB"/>
</dbReference>
<dbReference type="GO" id="GO:0000082">
    <property type="term" value="P:G1/S transition of mitotic cell cycle"/>
    <property type="evidence" value="ECO:0000250"/>
    <property type="project" value="UniProtKB"/>
</dbReference>
<dbReference type="GO" id="GO:0031571">
    <property type="term" value="P:mitotic G1 DNA damage checkpoint signaling"/>
    <property type="evidence" value="ECO:0000250"/>
    <property type="project" value="UniProtKB"/>
</dbReference>
<dbReference type="GO" id="GO:0000122">
    <property type="term" value="P:negative regulation of transcription by RNA polymerase II"/>
    <property type="evidence" value="ECO:0000250"/>
    <property type="project" value="UniProtKB"/>
</dbReference>
<dbReference type="GO" id="GO:1900087">
    <property type="term" value="P:positive regulation of G1/S transition of mitotic cell cycle"/>
    <property type="evidence" value="ECO:0000318"/>
    <property type="project" value="GO_Central"/>
</dbReference>
<dbReference type="GO" id="GO:0010971">
    <property type="term" value="P:positive regulation of G2/M transition of mitotic cell cycle"/>
    <property type="evidence" value="ECO:0000250"/>
    <property type="project" value="UniProtKB"/>
</dbReference>
<dbReference type="GO" id="GO:0070141">
    <property type="term" value="P:response to UV-A"/>
    <property type="evidence" value="ECO:0000250"/>
    <property type="project" value="UniProtKB"/>
</dbReference>
<dbReference type="CDD" id="cd20573">
    <property type="entry name" value="CYCLIN_CCND1_rpt1"/>
    <property type="match status" value="1"/>
</dbReference>
<dbReference type="FunFam" id="1.10.472.10:FF:000120">
    <property type="entry name" value="G1/S-specific cyclin-D1"/>
    <property type="match status" value="1"/>
</dbReference>
<dbReference type="Gene3D" id="1.10.472.10">
    <property type="entry name" value="Cyclin-like"/>
    <property type="match status" value="2"/>
</dbReference>
<dbReference type="InterPro" id="IPR039361">
    <property type="entry name" value="Cyclin"/>
</dbReference>
<dbReference type="InterPro" id="IPR013763">
    <property type="entry name" value="Cyclin-like_dom"/>
</dbReference>
<dbReference type="InterPro" id="IPR036915">
    <property type="entry name" value="Cyclin-like_sf"/>
</dbReference>
<dbReference type="InterPro" id="IPR004367">
    <property type="entry name" value="Cyclin_C-dom"/>
</dbReference>
<dbReference type="InterPro" id="IPR006671">
    <property type="entry name" value="Cyclin_N"/>
</dbReference>
<dbReference type="PANTHER" id="PTHR10177">
    <property type="entry name" value="CYCLINS"/>
    <property type="match status" value="1"/>
</dbReference>
<dbReference type="Pfam" id="PF02984">
    <property type="entry name" value="Cyclin_C"/>
    <property type="match status" value="1"/>
</dbReference>
<dbReference type="Pfam" id="PF00134">
    <property type="entry name" value="Cyclin_N"/>
    <property type="match status" value="1"/>
</dbReference>
<dbReference type="SMART" id="SM00385">
    <property type="entry name" value="CYCLIN"/>
    <property type="match status" value="1"/>
</dbReference>
<dbReference type="SMART" id="SM01332">
    <property type="entry name" value="Cyclin_C"/>
    <property type="match status" value="1"/>
</dbReference>
<dbReference type="SUPFAM" id="SSF47954">
    <property type="entry name" value="Cyclin-like"/>
    <property type="match status" value="2"/>
</dbReference>
<proteinExistence type="evidence at transcript level"/>
<feature type="chain" id="PRO_0000080429" description="G1/S-specific cyclin-D1">
    <location>
        <begin position="1"/>
        <end position="295"/>
    </location>
</feature>
<feature type="domain" description="Cyclin N-terminal">
    <location>
        <begin position="28"/>
        <end position="152"/>
    </location>
</feature>
<feature type="region of interest" description="Disordered" evidence="3">
    <location>
        <begin position="264"/>
        <end position="295"/>
    </location>
</feature>
<feature type="compositionally biased region" description="Acidic residues" evidence="3">
    <location>
        <begin position="273"/>
        <end position="282"/>
    </location>
</feature>
<feature type="modified residue" description="Phosphothreonine" evidence="1">
    <location>
        <position position="286"/>
    </location>
</feature>
<feature type="cross-link" description="Glycyl lysine isopeptide (Lys-Gly) (interchain with G-Cter in ubiquitin)" evidence="2">
    <location>
        <position position="270"/>
    </location>
</feature>
<accession>Q64HP0</accession>
<comment type="function">
    <text evidence="1">Regulatory component of the cyclin D1-CDK4 (DC) complex that phosphorylates and inhibits members of the retinoblastoma (RB) protein family including RB1 and regulates the cell-cycle during G(1)/S transition. Phosphorylation of RB1 allows dissociation of the transcription factor E2F from the RB/E2F complex and the subsequent transcription of E2F target genes which are responsible for the progression through the G(1) phase. Hypophosphorylates RB1 in early G(1) phase. Cyclin D-CDK4 complexes are major integrators of various mitogenenic and antimitogenic signals. Also a substrate for SMAD3, phosphorylating SMAD3 in a cell-cycle-dependent manner and repressing its transcriptional activity. Component of the ternary complex, cyclin D1/CDK4/CDKN1B, required for nuclear translocation and activity of the cyclin D-CDK4 complex. Exhibits transcriptional corepressor activity with INSM1 on the NEUROD1 and INS promoters in a cell cycle-independent manner.</text>
</comment>
<comment type="subunit">
    <text evidence="1 2">Interacts with either CDK4 or CDK6 protein kinase to form a serine/threonine kinase holoenzyme complex. The cyclin subunit imparts substrate specificity to the complex. Component of the ternary complex CCND1/CDK4/CDKN1B required for nuclear translocation and modulation of CDK4-mediated kinase activity (By similarity). Interacts directly with CDKN1B. Can form similar complexes with either CDKN1A or CDKN2A. Interacts with UHRF2; the interaction ubiquitinates CCND1 and appears to occur independently of phosphorylation. Interacts with USP2. Interacts (via cyclin N-terminal domain) with INSM1 (via N-terminal region); the interaction competes with the binding of CCND1 to CDK4 during cell cycle progression and inhibits CDK4 activity. Interacts with CDK4; the interaction is prevented with the binding of CCND1 to INSM1 during cell cycle progression (By similarity).</text>
</comment>
<comment type="subcellular location">
    <subcellularLocation>
        <location evidence="1">Nucleus</location>
    </subcellularLocation>
    <subcellularLocation>
        <location evidence="1">Cytoplasm</location>
    </subcellularLocation>
    <subcellularLocation>
        <location evidence="1">Nucleus membrane</location>
    </subcellularLocation>
    <text evidence="1">Cyclin D-CDK4 complexes accumulate at the nuclear membrane and are then translocated into the nucleus through interaction with KIP/CIP family members.</text>
</comment>
<comment type="PTM">
    <text evidence="1">Phosphorylation at Thr-286 by MAP kinases is required for ubiquitination and degradation by the DCX(AMBRA1) complex. It also plays an essential role for recognition by the FBXO31 component of SCF (SKP1-cullin-F-box) protein ligase complex following DNA damage.</text>
</comment>
<comment type="PTM">
    <text evidence="1 2">Ubiquitinated at Lys-270 by the DCX(AMBRA1) complex during the transition from G1 to S cell phase, leading to its degradation: ubiquitination is dependent on Thr-286 phosphorylation. The DCX(AMBRA1) complex represents the major regulator of CCND1 stability during the G1/S transition (By similarity). Also ubiquitinated by the SCF(FBXO4) and Cul7-RING(FBXW8) ubiquitin-protein ligase complexes (By similarity). Following DNA damage it is ubiquitinated by the SCF(FBXO31) protein ligase complex. SCF(FBXO31) ubiquitination is dependent on Thr-286 phosphorylation. Ubiquitinated also by UHRF2 apparently in a phosphorylation-independent manner. Ubiquitination leads to its degradation and G1 arrest. Deubiquitinated by USP2; leading to its stabilization (By similarity).</text>
</comment>
<comment type="similarity">
    <text evidence="4">Belongs to the cyclin family. Cyclin D subfamily.</text>
</comment>
<evidence type="ECO:0000250" key="1">
    <source>
        <dbReference type="UniProtKB" id="P24385"/>
    </source>
</evidence>
<evidence type="ECO:0000250" key="2">
    <source>
        <dbReference type="UniProtKB" id="P25322"/>
    </source>
</evidence>
<evidence type="ECO:0000256" key="3">
    <source>
        <dbReference type="SAM" id="MobiDB-lite"/>
    </source>
</evidence>
<evidence type="ECO:0000305" key="4"/>
<organism>
    <name type="scientific">Canis lupus familiaris</name>
    <name type="common">Dog</name>
    <name type="synonym">Canis familiaris</name>
    <dbReference type="NCBI Taxonomy" id="9615"/>
    <lineage>
        <taxon>Eukaryota</taxon>
        <taxon>Metazoa</taxon>
        <taxon>Chordata</taxon>
        <taxon>Craniata</taxon>
        <taxon>Vertebrata</taxon>
        <taxon>Euteleostomi</taxon>
        <taxon>Mammalia</taxon>
        <taxon>Eutheria</taxon>
        <taxon>Laurasiatheria</taxon>
        <taxon>Carnivora</taxon>
        <taxon>Caniformia</taxon>
        <taxon>Canidae</taxon>
        <taxon>Canis</taxon>
    </lineage>
</organism>
<protein>
    <recommendedName>
        <fullName>G1/S-specific cyclin-D1</fullName>
    </recommendedName>
</protein>
<reference key="1">
    <citation type="journal article" date="2004" name="Anim. Genet.">
        <title>Molecular characterization and mapping of the canine cyclin D1 (CCND1) gene.</title>
        <authorList>
            <person name="Meyer B."/>
            <person name="Murua Escobar H."/>
            <person name="Winkler S."/>
            <person name="Dolf G."/>
            <person name="Schelling C."/>
            <person name="Bullerdiek J."/>
            <person name="Nolte I."/>
        </authorList>
    </citation>
    <scope>NUCLEOTIDE SEQUENCE [MRNA]</scope>
    <source>
        <tissue>Osteosarcoma</tissue>
    </source>
</reference>
<gene>
    <name type="primary">CCND1</name>
</gene>
<sequence length="295" mass="33372">MAHQLLCCEVETIRRAYPDANLLNDRVLRAMLKAEETCAPSVSYFKCVQKEILPSMRKIVATWMLEVCEEQKCEEEVFPLAMNYLNRFLSLEPVKKSRLQLLGATCMFVASKMKETIPLTAEKLCIYTDNSIRPDELLQMELLLVNKLKWNLAAMTPHDFIEHFLSKMPVAEENKQIIRKHAQTFVALCATDVKFISNPPSMVAAGSVVAAVQGLHLGSSNSFLSYHRLTRFLSKVIKCDADCLRACQEQIEALLESSLRQAQQQSLDPKAAEEEEEEEEADLACTPTDVRDVNI</sequence>
<keyword id="KW-0131">Cell cycle</keyword>
<keyword id="KW-0132">Cell division</keyword>
<keyword id="KW-0195">Cyclin</keyword>
<keyword id="KW-0963">Cytoplasm</keyword>
<keyword id="KW-1017">Isopeptide bond</keyword>
<keyword id="KW-0472">Membrane</keyword>
<keyword id="KW-0539">Nucleus</keyword>
<keyword id="KW-0597">Phosphoprotein</keyword>
<keyword id="KW-1185">Reference proteome</keyword>
<keyword id="KW-0678">Repressor</keyword>
<keyword id="KW-0804">Transcription</keyword>
<keyword id="KW-0805">Transcription regulation</keyword>
<keyword id="KW-0832">Ubl conjugation</keyword>